<feature type="chain" id="PRO_1000072637" description="tRNA (guanine-N(1)-)-methyltransferase">
    <location>
        <begin position="1"/>
        <end position="254"/>
    </location>
</feature>
<feature type="binding site" evidence="1">
    <location>
        <position position="114"/>
    </location>
    <ligand>
        <name>S-adenosyl-L-methionine</name>
        <dbReference type="ChEBI" id="CHEBI:59789"/>
    </ligand>
</feature>
<feature type="binding site" evidence="1">
    <location>
        <begin position="134"/>
        <end position="139"/>
    </location>
    <ligand>
        <name>S-adenosyl-L-methionine</name>
        <dbReference type="ChEBI" id="CHEBI:59789"/>
    </ligand>
</feature>
<dbReference type="EC" id="2.1.1.228" evidence="1"/>
<dbReference type="EMBL" id="CP000612">
    <property type="protein sequence ID" value="ABO50568.1"/>
    <property type="molecule type" value="Genomic_DNA"/>
</dbReference>
<dbReference type="RefSeq" id="WP_011878374.1">
    <property type="nucleotide sequence ID" value="NC_009253.1"/>
</dbReference>
<dbReference type="SMR" id="A4J665"/>
<dbReference type="STRING" id="349161.Dred_2051"/>
<dbReference type="KEGG" id="drm:Dred_2051"/>
<dbReference type="eggNOG" id="COG0336">
    <property type="taxonomic scope" value="Bacteria"/>
</dbReference>
<dbReference type="HOGENOM" id="CLU_047363_0_1_9"/>
<dbReference type="OrthoDB" id="9807416at2"/>
<dbReference type="Proteomes" id="UP000001556">
    <property type="component" value="Chromosome"/>
</dbReference>
<dbReference type="GO" id="GO:0005829">
    <property type="term" value="C:cytosol"/>
    <property type="evidence" value="ECO:0007669"/>
    <property type="project" value="TreeGrafter"/>
</dbReference>
<dbReference type="GO" id="GO:0052906">
    <property type="term" value="F:tRNA (guanine(37)-N1)-methyltransferase activity"/>
    <property type="evidence" value="ECO:0007669"/>
    <property type="project" value="UniProtKB-UniRule"/>
</dbReference>
<dbReference type="GO" id="GO:0002939">
    <property type="term" value="P:tRNA N1-guanine methylation"/>
    <property type="evidence" value="ECO:0007669"/>
    <property type="project" value="TreeGrafter"/>
</dbReference>
<dbReference type="CDD" id="cd18080">
    <property type="entry name" value="TrmD-like"/>
    <property type="match status" value="1"/>
</dbReference>
<dbReference type="FunFam" id="1.10.1270.20:FF:000001">
    <property type="entry name" value="tRNA (guanine-N(1)-)-methyltransferase"/>
    <property type="match status" value="1"/>
</dbReference>
<dbReference type="FunFam" id="3.40.1280.10:FF:000001">
    <property type="entry name" value="tRNA (guanine-N(1)-)-methyltransferase"/>
    <property type="match status" value="1"/>
</dbReference>
<dbReference type="Gene3D" id="3.40.1280.10">
    <property type="match status" value="1"/>
</dbReference>
<dbReference type="Gene3D" id="1.10.1270.20">
    <property type="entry name" value="tRNA(m1g37)methyltransferase, domain 2"/>
    <property type="match status" value="1"/>
</dbReference>
<dbReference type="HAMAP" id="MF_00605">
    <property type="entry name" value="TrmD"/>
    <property type="match status" value="1"/>
</dbReference>
<dbReference type="InterPro" id="IPR029028">
    <property type="entry name" value="Alpha/beta_knot_MTases"/>
</dbReference>
<dbReference type="InterPro" id="IPR023148">
    <property type="entry name" value="tRNA_m1G_MeTrfase_C_sf"/>
</dbReference>
<dbReference type="InterPro" id="IPR002649">
    <property type="entry name" value="tRNA_m1G_MeTrfase_TrmD"/>
</dbReference>
<dbReference type="InterPro" id="IPR029026">
    <property type="entry name" value="tRNA_m1G_MTases_N"/>
</dbReference>
<dbReference type="InterPro" id="IPR016009">
    <property type="entry name" value="tRNA_MeTrfase_TRMD/TRM10"/>
</dbReference>
<dbReference type="NCBIfam" id="NF000648">
    <property type="entry name" value="PRK00026.1"/>
    <property type="match status" value="1"/>
</dbReference>
<dbReference type="NCBIfam" id="TIGR00088">
    <property type="entry name" value="trmD"/>
    <property type="match status" value="1"/>
</dbReference>
<dbReference type="PANTHER" id="PTHR46417">
    <property type="entry name" value="TRNA (GUANINE-N(1)-)-METHYLTRANSFERASE"/>
    <property type="match status" value="1"/>
</dbReference>
<dbReference type="PANTHER" id="PTHR46417:SF1">
    <property type="entry name" value="TRNA (GUANINE-N(1)-)-METHYLTRANSFERASE"/>
    <property type="match status" value="1"/>
</dbReference>
<dbReference type="Pfam" id="PF01746">
    <property type="entry name" value="tRNA_m1G_MT"/>
    <property type="match status" value="1"/>
</dbReference>
<dbReference type="PIRSF" id="PIRSF000386">
    <property type="entry name" value="tRNA_mtase"/>
    <property type="match status" value="1"/>
</dbReference>
<dbReference type="SUPFAM" id="SSF75217">
    <property type="entry name" value="alpha/beta knot"/>
    <property type="match status" value="1"/>
</dbReference>
<proteinExistence type="inferred from homology"/>
<sequence>MRIDILTLFPEMFQGPFNHSILKRAQENNLLQIDTINIRDFSQNKHHTVDDTPYGGGAGMVMGPEPLFECFDHLKAKNAGQVGRVIMMCPQGEPFTQEYAKELAREENLVIVCGHYEGIDERVREVLVTDEISIGDYVLTGGELPAMVVVDAVARMIPGVLGETASAEEDSFYNGLLEHPHFTKPREYRGYEVPEILLSGHHGNIRKWRRRQSLLRTLERRPELLKDVELSKEDKKVLLELQNLLLSLNLKQMK</sequence>
<organism>
    <name type="scientific">Desulforamulus reducens (strain ATCC BAA-1160 / DSM 100696 / MI-1)</name>
    <name type="common">Desulfotomaculum reducens</name>
    <dbReference type="NCBI Taxonomy" id="349161"/>
    <lineage>
        <taxon>Bacteria</taxon>
        <taxon>Bacillati</taxon>
        <taxon>Bacillota</taxon>
        <taxon>Clostridia</taxon>
        <taxon>Eubacteriales</taxon>
        <taxon>Peptococcaceae</taxon>
        <taxon>Desulforamulus</taxon>
    </lineage>
</organism>
<gene>
    <name evidence="1" type="primary">trmD</name>
    <name type="ordered locus">Dred_2051</name>
</gene>
<protein>
    <recommendedName>
        <fullName evidence="1">tRNA (guanine-N(1)-)-methyltransferase</fullName>
        <ecNumber evidence="1">2.1.1.228</ecNumber>
    </recommendedName>
    <alternativeName>
        <fullName evidence="1">M1G-methyltransferase</fullName>
    </alternativeName>
    <alternativeName>
        <fullName evidence="1">tRNA [GM37] methyltransferase</fullName>
    </alternativeName>
</protein>
<reference key="1">
    <citation type="submission" date="2007-03" db="EMBL/GenBank/DDBJ databases">
        <title>Complete sequence of Desulfotomaculum reducens MI-1.</title>
        <authorList>
            <consortium name="US DOE Joint Genome Institute"/>
            <person name="Copeland A."/>
            <person name="Lucas S."/>
            <person name="Lapidus A."/>
            <person name="Barry K."/>
            <person name="Detter J.C."/>
            <person name="Glavina del Rio T."/>
            <person name="Hammon N."/>
            <person name="Israni S."/>
            <person name="Dalin E."/>
            <person name="Tice H."/>
            <person name="Pitluck S."/>
            <person name="Sims D."/>
            <person name="Brettin T."/>
            <person name="Bruce D."/>
            <person name="Han C."/>
            <person name="Tapia R."/>
            <person name="Schmutz J."/>
            <person name="Larimer F."/>
            <person name="Land M."/>
            <person name="Hauser L."/>
            <person name="Kyrpides N."/>
            <person name="Kim E."/>
            <person name="Tebo B.M."/>
            <person name="Richardson P."/>
        </authorList>
    </citation>
    <scope>NUCLEOTIDE SEQUENCE [LARGE SCALE GENOMIC DNA]</scope>
    <source>
        <strain>ATCC BAA-1160 / DSM 100696 / MI-1</strain>
    </source>
</reference>
<accession>A4J665</accession>
<comment type="function">
    <text evidence="1">Specifically methylates guanosine-37 in various tRNAs.</text>
</comment>
<comment type="catalytic activity">
    <reaction evidence="1">
        <text>guanosine(37) in tRNA + S-adenosyl-L-methionine = N(1)-methylguanosine(37) in tRNA + S-adenosyl-L-homocysteine + H(+)</text>
        <dbReference type="Rhea" id="RHEA:36899"/>
        <dbReference type="Rhea" id="RHEA-COMP:10145"/>
        <dbReference type="Rhea" id="RHEA-COMP:10147"/>
        <dbReference type="ChEBI" id="CHEBI:15378"/>
        <dbReference type="ChEBI" id="CHEBI:57856"/>
        <dbReference type="ChEBI" id="CHEBI:59789"/>
        <dbReference type="ChEBI" id="CHEBI:73542"/>
        <dbReference type="ChEBI" id="CHEBI:74269"/>
        <dbReference type="EC" id="2.1.1.228"/>
    </reaction>
</comment>
<comment type="subunit">
    <text evidence="1">Homodimer.</text>
</comment>
<comment type="subcellular location">
    <subcellularLocation>
        <location evidence="1">Cytoplasm</location>
    </subcellularLocation>
</comment>
<comment type="similarity">
    <text evidence="1">Belongs to the RNA methyltransferase TrmD family.</text>
</comment>
<keyword id="KW-0963">Cytoplasm</keyword>
<keyword id="KW-0489">Methyltransferase</keyword>
<keyword id="KW-1185">Reference proteome</keyword>
<keyword id="KW-0949">S-adenosyl-L-methionine</keyword>
<keyword id="KW-0808">Transferase</keyword>
<keyword id="KW-0819">tRNA processing</keyword>
<name>TRMD_DESRM</name>
<evidence type="ECO:0000255" key="1">
    <source>
        <dbReference type="HAMAP-Rule" id="MF_00605"/>
    </source>
</evidence>